<comment type="function">
    <text evidence="1">Specifically methylates guanosine-37 in various tRNAs.</text>
</comment>
<comment type="catalytic activity">
    <reaction evidence="1">
        <text>guanosine(37) in tRNA + S-adenosyl-L-methionine = N(1)-methylguanosine(37) in tRNA + S-adenosyl-L-homocysteine + H(+)</text>
        <dbReference type="Rhea" id="RHEA:36899"/>
        <dbReference type="Rhea" id="RHEA-COMP:10145"/>
        <dbReference type="Rhea" id="RHEA-COMP:10147"/>
        <dbReference type="ChEBI" id="CHEBI:15378"/>
        <dbReference type="ChEBI" id="CHEBI:57856"/>
        <dbReference type="ChEBI" id="CHEBI:59789"/>
        <dbReference type="ChEBI" id="CHEBI:73542"/>
        <dbReference type="ChEBI" id="CHEBI:74269"/>
        <dbReference type="EC" id="2.1.1.228"/>
    </reaction>
</comment>
<comment type="subunit">
    <text evidence="1">Homodimer.</text>
</comment>
<comment type="subcellular location">
    <subcellularLocation>
        <location evidence="1">Cytoplasm</location>
    </subcellularLocation>
</comment>
<comment type="similarity">
    <text evidence="1">Belongs to the RNA methyltransferase TrmD family.</text>
</comment>
<organism>
    <name type="scientific">Escherichia coli O9:H4 (strain HS)</name>
    <dbReference type="NCBI Taxonomy" id="331112"/>
    <lineage>
        <taxon>Bacteria</taxon>
        <taxon>Pseudomonadati</taxon>
        <taxon>Pseudomonadota</taxon>
        <taxon>Gammaproteobacteria</taxon>
        <taxon>Enterobacterales</taxon>
        <taxon>Enterobacteriaceae</taxon>
        <taxon>Escherichia</taxon>
    </lineage>
</organism>
<feature type="chain" id="PRO_1000061270" description="tRNA (guanine-N(1)-)-methyltransferase">
    <location>
        <begin position="1"/>
        <end position="255"/>
    </location>
</feature>
<feature type="binding site" evidence="1">
    <location>
        <position position="113"/>
    </location>
    <ligand>
        <name>S-adenosyl-L-methionine</name>
        <dbReference type="ChEBI" id="CHEBI:59789"/>
    </ligand>
</feature>
<feature type="binding site" evidence="1">
    <location>
        <begin position="133"/>
        <end position="138"/>
    </location>
    <ligand>
        <name>S-adenosyl-L-methionine</name>
        <dbReference type="ChEBI" id="CHEBI:59789"/>
    </ligand>
</feature>
<sequence>MWIGIISLFPEMFRAITDYGVTGRAVKNGLLSIQSWSPRDFTHDRHRTVDDRPYGGGPGMLMMVQPLRDAIHAAKAAAGEGAKVIYLSPQGRKLDQAGVSELATNQKLILVCGRYEGIDERVIQTEIDEEWSIGDYVLSGGELPAMTLIDSVSRFIPGVLGHEASATEDSFAEGLLDCPHYTRPEVLEGMEVPPVLLSGNHAEIRRWRLKQSLGRTWLRRPELLENLALTEEQARLLAEFKTEHAQQQHKHDGMA</sequence>
<accession>A8A3B4</accession>
<gene>
    <name evidence="1" type="primary">trmD</name>
    <name type="ordered locus">EcHS_A2766</name>
</gene>
<keyword id="KW-0963">Cytoplasm</keyword>
<keyword id="KW-0489">Methyltransferase</keyword>
<keyword id="KW-0949">S-adenosyl-L-methionine</keyword>
<keyword id="KW-0808">Transferase</keyword>
<keyword id="KW-0819">tRNA processing</keyword>
<reference key="1">
    <citation type="journal article" date="2008" name="J. Bacteriol.">
        <title>The pangenome structure of Escherichia coli: comparative genomic analysis of E. coli commensal and pathogenic isolates.</title>
        <authorList>
            <person name="Rasko D.A."/>
            <person name="Rosovitz M.J."/>
            <person name="Myers G.S.A."/>
            <person name="Mongodin E.F."/>
            <person name="Fricke W.F."/>
            <person name="Gajer P."/>
            <person name="Crabtree J."/>
            <person name="Sebaihia M."/>
            <person name="Thomson N.R."/>
            <person name="Chaudhuri R."/>
            <person name="Henderson I.R."/>
            <person name="Sperandio V."/>
            <person name="Ravel J."/>
        </authorList>
    </citation>
    <scope>NUCLEOTIDE SEQUENCE [LARGE SCALE GENOMIC DNA]</scope>
    <source>
        <strain>HS</strain>
    </source>
</reference>
<proteinExistence type="inferred from homology"/>
<name>TRMD_ECOHS</name>
<protein>
    <recommendedName>
        <fullName evidence="1">tRNA (guanine-N(1)-)-methyltransferase</fullName>
        <ecNumber evidence="1">2.1.1.228</ecNumber>
    </recommendedName>
    <alternativeName>
        <fullName evidence="1">M1G-methyltransferase</fullName>
    </alternativeName>
    <alternativeName>
        <fullName evidence="1">tRNA [GM37] methyltransferase</fullName>
    </alternativeName>
</protein>
<dbReference type="EC" id="2.1.1.228" evidence="1"/>
<dbReference type="EMBL" id="CP000802">
    <property type="protein sequence ID" value="ABV07018.1"/>
    <property type="molecule type" value="Genomic_DNA"/>
</dbReference>
<dbReference type="RefSeq" id="WP_000264777.1">
    <property type="nucleotide sequence ID" value="NC_009800.1"/>
</dbReference>
<dbReference type="SMR" id="A8A3B4"/>
<dbReference type="GeneID" id="93774457"/>
<dbReference type="KEGG" id="ecx:EcHS_A2766"/>
<dbReference type="HOGENOM" id="CLU_047363_0_1_6"/>
<dbReference type="GO" id="GO:0005829">
    <property type="term" value="C:cytosol"/>
    <property type="evidence" value="ECO:0007669"/>
    <property type="project" value="TreeGrafter"/>
</dbReference>
<dbReference type="GO" id="GO:0052906">
    <property type="term" value="F:tRNA (guanine(37)-N1)-methyltransferase activity"/>
    <property type="evidence" value="ECO:0007669"/>
    <property type="project" value="UniProtKB-UniRule"/>
</dbReference>
<dbReference type="GO" id="GO:0002939">
    <property type="term" value="P:tRNA N1-guanine methylation"/>
    <property type="evidence" value="ECO:0007669"/>
    <property type="project" value="TreeGrafter"/>
</dbReference>
<dbReference type="CDD" id="cd18080">
    <property type="entry name" value="TrmD-like"/>
    <property type="match status" value="1"/>
</dbReference>
<dbReference type="FunFam" id="1.10.1270.20:FF:000001">
    <property type="entry name" value="tRNA (guanine-N(1)-)-methyltransferase"/>
    <property type="match status" value="1"/>
</dbReference>
<dbReference type="FunFam" id="3.40.1280.10:FF:000001">
    <property type="entry name" value="tRNA (guanine-N(1)-)-methyltransferase"/>
    <property type="match status" value="1"/>
</dbReference>
<dbReference type="Gene3D" id="3.40.1280.10">
    <property type="match status" value="1"/>
</dbReference>
<dbReference type="Gene3D" id="1.10.1270.20">
    <property type="entry name" value="tRNA(m1g37)methyltransferase, domain 2"/>
    <property type="match status" value="1"/>
</dbReference>
<dbReference type="HAMAP" id="MF_00605">
    <property type="entry name" value="TrmD"/>
    <property type="match status" value="1"/>
</dbReference>
<dbReference type="InterPro" id="IPR029028">
    <property type="entry name" value="Alpha/beta_knot_MTases"/>
</dbReference>
<dbReference type="InterPro" id="IPR023148">
    <property type="entry name" value="tRNA_m1G_MeTrfase_C_sf"/>
</dbReference>
<dbReference type="InterPro" id="IPR002649">
    <property type="entry name" value="tRNA_m1G_MeTrfase_TrmD"/>
</dbReference>
<dbReference type="InterPro" id="IPR029026">
    <property type="entry name" value="tRNA_m1G_MTases_N"/>
</dbReference>
<dbReference type="InterPro" id="IPR016009">
    <property type="entry name" value="tRNA_MeTrfase_TRMD/TRM10"/>
</dbReference>
<dbReference type="NCBIfam" id="NF000648">
    <property type="entry name" value="PRK00026.1"/>
    <property type="match status" value="1"/>
</dbReference>
<dbReference type="NCBIfam" id="TIGR00088">
    <property type="entry name" value="trmD"/>
    <property type="match status" value="1"/>
</dbReference>
<dbReference type="PANTHER" id="PTHR46417">
    <property type="entry name" value="TRNA (GUANINE-N(1)-)-METHYLTRANSFERASE"/>
    <property type="match status" value="1"/>
</dbReference>
<dbReference type="PANTHER" id="PTHR46417:SF1">
    <property type="entry name" value="TRNA (GUANINE-N(1)-)-METHYLTRANSFERASE"/>
    <property type="match status" value="1"/>
</dbReference>
<dbReference type="Pfam" id="PF01746">
    <property type="entry name" value="tRNA_m1G_MT"/>
    <property type="match status" value="1"/>
</dbReference>
<dbReference type="PIRSF" id="PIRSF000386">
    <property type="entry name" value="tRNA_mtase"/>
    <property type="match status" value="1"/>
</dbReference>
<dbReference type="SUPFAM" id="SSF75217">
    <property type="entry name" value="alpha/beta knot"/>
    <property type="match status" value="1"/>
</dbReference>
<evidence type="ECO:0000255" key="1">
    <source>
        <dbReference type="HAMAP-Rule" id="MF_00605"/>
    </source>
</evidence>